<accession>B8GX56</accession>
<dbReference type="EMBL" id="CP001340">
    <property type="protein sequence ID" value="ACL95546.1"/>
    <property type="molecule type" value="Genomic_DNA"/>
</dbReference>
<dbReference type="RefSeq" id="WP_010919868.1">
    <property type="nucleotide sequence ID" value="NC_011916.1"/>
</dbReference>
<dbReference type="RefSeq" id="YP_002517454.1">
    <property type="nucleotide sequence ID" value="NC_011916.1"/>
</dbReference>
<dbReference type="GeneID" id="7330387"/>
<dbReference type="KEGG" id="ccs:CCNA_02081"/>
<dbReference type="PATRIC" id="fig|565050.3.peg.2039"/>
<dbReference type="HOGENOM" id="CLU_086034_1_3_5"/>
<dbReference type="OrthoDB" id="7206969at2"/>
<dbReference type="Proteomes" id="UP000001364">
    <property type="component" value="Chromosome"/>
</dbReference>
<dbReference type="GO" id="GO:0033281">
    <property type="term" value="C:TAT protein transport complex"/>
    <property type="evidence" value="ECO:0007669"/>
    <property type="project" value="UniProtKB-UniRule"/>
</dbReference>
<dbReference type="GO" id="GO:0008320">
    <property type="term" value="F:protein transmembrane transporter activity"/>
    <property type="evidence" value="ECO:0007669"/>
    <property type="project" value="UniProtKB-UniRule"/>
</dbReference>
<dbReference type="GO" id="GO:0043953">
    <property type="term" value="P:protein transport by the Tat complex"/>
    <property type="evidence" value="ECO:0007669"/>
    <property type="project" value="UniProtKB-UniRule"/>
</dbReference>
<dbReference type="Gene3D" id="1.20.5.3310">
    <property type="match status" value="1"/>
</dbReference>
<dbReference type="HAMAP" id="MF_00237">
    <property type="entry name" value="TatB"/>
    <property type="match status" value="1"/>
</dbReference>
<dbReference type="InterPro" id="IPR003369">
    <property type="entry name" value="TatA/B/E"/>
</dbReference>
<dbReference type="InterPro" id="IPR018448">
    <property type="entry name" value="TatB"/>
</dbReference>
<dbReference type="NCBIfam" id="TIGR01410">
    <property type="entry name" value="tatB"/>
    <property type="match status" value="1"/>
</dbReference>
<dbReference type="Pfam" id="PF02416">
    <property type="entry name" value="TatA_B_E"/>
    <property type="match status" value="1"/>
</dbReference>
<dbReference type="PRINTS" id="PR01506">
    <property type="entry name" value="TATBPROTEIN"/>
</dbReference>
<name>TATB_CAUVN</name>
<sequence>MLPDIGGTELLIIAAVALIVVGPKDLPALLRKVGQFVGRMRGMASEFRASFDEMARQSELDELRREVQAMRSGQFTNPVQDAADAARDVQVDQVFADIDASLSSGAMQAHPYAAGETHNSILPTAEPSAEIVEAKPKRAPRKKAVAEPVAAEPVLVEPVKAPRKRASQKQEITVEAPKAVRAPRKRASKAGDSTASDIVS</sequence>
<proteinExistence type="inferred from homology"/>
<keyword id="KW-0997">Cell inner membrane</keyword>
<keyword id="KW-1003">Cell membrane</keyword>
<keyword id="KW-0472">Membrane</keyword>
<keyword id="KW-0653">Protein transport</keyword>
<keyword id="KW-1185">Reference proteome</keyword>
<keyword id="KW-0811">Translocation</keyword>
<keyword id="KW-0812">Transmembrane</keyword>
<keyword id="KW-1133">Transmembrane helix</keyword>
<keyword id="KW-0813">Transport</keyword>
<reference key="1">
    <citation type="journal article" date="2010" name="J. Bacteriol.">
        <title>The genetic basis of laboratory adaptation in Caulobacter crescentus.</title>
        <authorList>
            <person name="Marks M.E."/>
            <person name="Castro-Rojas C.M."/>
            <person name="Teiling C."/>
            <person name="Du L."/>
            <person name="Kapatral V."/>
            <person name="Walunas T.L."/>
            <person name="Crosson S."/>
        </authorList>
    </citation>
    <scope>NUCLEOTIDE SEQUENCE [LARGE SCALE GENOMIC DNA]</scope>
    <source>
        <strain>NA1000 / CB15N</strain>
    </source>
</reference>
<organism>
    <name type="scientific">Caulobacter vibrioides (strain NA1000 / CB15N)</name>
    <name type="common">Caulobacter crescentus</name>
    <dbReference type="NCBI Taxonomy" id="565050"/>
    <lineage>
        <taxon>Bacteria</taxon>
        <taxon>Pseudomonadati</taxon>
        <taxon>Pseudomonadota</taxon>
        <taxon>Alphaproteobacteria</taxon>
        <taxon>Caulobacterales</taxon>
        <taxon>Caulobacteraceae</taxon>
        <taxon>Caulobacter</taxon>
    </lineage>
</organism>
<comment type="function">
    <text evidence="1">Part of the twin-arginine translocation (Tat) system that transports large folded proteins containing a characteristic twin-arginine motif in their signal peptide across membranes. Together with TatC, TatB is part of a receptor directly interacting with Tat signal peptides. TatB may form an oligomeric binding site that transiently accommodates folded Tat precursor proteins before their translocation.</text>
</comment>
<comment type="subunit">
    <text evidence="1">The Tat system comprises two distinct complexes: a TatABC complex, containing multiple copies of TatA, TatB and TatC subunits, and a separate TatA complex, containing only TatA subunits. Substrates initially bind to the TatABC complex, which probably triggers association of the separate TatA complex to form the active translocon.</text>
</comment>
<comment type="subcellular location">
    <subcellularLocation>
        <location evidence="1">Cell inner membrane</location>
        <topology evidence="1">Single-pass membrane protein</topology>
    </subcellularLocation>
</comment>
<comment type="similarity">
    <text evidence="1">Belongs to the TatB family.</text>
</comment>
<gene>
    <name evidence="1" type="primary">tatB</name>
    <name type="ordered locus">CCNA_02081</name>
</gene>
<protein>
    <recommendedName>
        <fullName evidence="1">Sec-independent protein translocase protein TatB</fullName>
    </recommendedName>
</protein>
<evidence type="ECO:0000255" key="1">
    <source>
        <dbReference type="HAMAP-Rule" id="MF_00237"/>
    </source>
</evidence>
<evidence type="ECO:0000256" key="2">
    <source>
        <dbReference type="SAM" id="MobiDB-lite"/>
    </source>
</evidence>
<feature type="chain" id="PRO_1000196659" description="Sec-independent protein translocase protein TatB">
    <location>
        <begin position="1"/>
        <end position="200"/>
    </location>
</feature>
<feature type="transmembrane region" description="Helical" evidence="1">
    <location>
        <begin position="2"/>
        <end position="22"/>
    </location>
</feature>
<feature type="region of interest" description="Disordered" evidence="2">
    <location>
        <begin position="160"/>
        <end position="200"/>
    </location>
</feature>
<feature type="compositionally biased region" description="Polar residues" evidence="2">
    <location>
        <begin position="191"/>
        <end position="200"/>
    </location>
</feature>